<dbReference type="EC" id="1.-.-.-"/>
<dbReference type="EMBL" id="Z74162">
    <property type="protein sequence ID" value="CAA98682.1"/>
    <property type="molecule type" value="Genomic_DNA"/>
</dbReference>
<dbReference type="EMBL" id="BK006938">
    <property type="protein sequence ID" value="DAA11746.1"/>
    <property type="molecule type" value="Genomic_DNA"/>
</dbReference>
<dbReference type="PIR" id="S67657">
    <property type="entry name" value="S67657"/>
</dbReference>
<dbReference type="RefSeq" id="NP_010169.1">
    <property type="nucleotide sequence ID" value="NM_001180173.1"/>
</dbReference>
<dbReference type="SMR" id="Q07530"/>
<dbReference type="BioGRID" id="31948">
    <property type="interactions" value="43"/>
</dbReference>
<dbReference type="DIP" id="DIP-5029N"/>
<dbReference type="FunCoup" id="Q07530">
    <property type="interactions" value="651"/>
</dbReference>
<dbReference type="IntAct" id="Q07530">
    <property type="interactions" value="4"/>
</dbReference>
<dbReference type="STRING" id="4932.YDL114W"/>
<dbReference type="iPTMnet" id="Q07530"/>
<dbReference type="PaxDb" id="4932-YDL114W"/>
<dbReference type="PeptideAtlas" id="Q07530"/>
<dbReference type="EnsemblFungi" id="YDL114W_mRNA">
    <property type="protein sequence ID" value="YDL114W"/>
    <property type="gene ID" value="YDL114W"/>
</dbReference>
<dbReference type="GeneID" id="851444"/>
<dbReference type="KEGG" id="sce:YDL114W"/>
<dbReference type="AGR" id="SGD:S000002272"/>
<dbReference type="SGD" id="S000002272">
    <property type="gene designation" value="YDL114W"/>
</dbReference>
<dbReference type="VEuPathDB" id="FungiDB:YDL114W"/>
<dbReference type="eggNOG" id="KOG1201">
    <property type="taxonomic scope" value="Eukaryota"/>
</dbReference>
<dbReference type="GeneTree" id="ENSGT00940000169042"/>
<dbReference type="HOGENOM" id="CLU_010194_5_1_1"/>
<dbReference type="InParanoid" id="Q07530"/>
<dbReference type="OMA" id="YMTGTDF"/>
<dbReference type="OrthoDB" id="10253736at2759"/>
<dbReference type="BioCyc" id="YEAST:G3O-29514-MONOMER"/>
<dbReference type="Reactome" id="R-SCE-193144">
    <property type="pathway name" value="Estrogen biosynthesis"/>
</dbReference>
<dbReference type="Reactome" id="R-SCE-2187335">
    <property type="pathway name" value="The retinoid cycle in cones (daylight vision)"/>
</dbReference>
<dbReference type="Reactome" id="R-SCE-5365859">
    <property type="pathway name" value="RA biosynthesis pathway"/>
</dbReference>
<dbReference type="Reactome" id="R-SCE-8964572">
    <property type="pathway name" value="Lipid particle organization"/>
</dbReference>
<dbReference type="BioGRID-ORCS" id="851444">
    <property type="hits" value="0 hits in 10 CRISPR screens"/>
</dbReference>
<dbReference type="PRO" id="PR:Q07530"/>
<dbReference type="Proteomes" id="UP000002311">
    <property type="component" value="Chromosome IV"/>
</dbReference>
<dbReference type="RNAct" id="Q07530">
    <property type="molecule type" value="protein"/>
</dbReference>
<dbReference type="GO" id="GO:0016616">
    <property type="term" value="F:oxidoreductase activity, acting on the CH-OH group of donors, NAD or NADP as acceptor"/>
    <property type="evidence" value="ECO:0000318"/>
    <property type="project" value="GO_Central"/>
</dbReference>
<dbReference type="CDD" id="cd05339">
    <property type="entry name" value="17beta-HSDXI-like_SDR_c"/>
    <property type="match status" value="1"/>
</dbReference>
<dbReference type="Gene3D" id="3.40.50.720">
    <property type="entry name" value="NAD(P)-binding Rossmann-like Domain"/>
    <property type="match status" value="1"/>
</dbReference>
<dbReference type="InterPro" id="IPR036291">
    <property type="entry name" value="NAD(P)-bd_dom_sf"/>
</dbReference>
<dbReference type="InterPro" id="IPR020904">
    <property type="entry name" value="Sc_DH/Rdtase_CS"/>
</dbReference>
<dbReference type="InterPro" id="IPR002347">
    <property type="entry name" value="SDR_fam"/>
</dbReference>
<dbReference type="PANTHER" id="PTHR24322">
    <property type="entry name" value="PKSB"/>
    <property type="match status" value="1"/>
</dbReference>
<dbReference type="PANTHER" id="PTHR24322:SF736">
    <property type="entry name" value="RETINOL DEHYDROGENASE 10"/>
    <property type="match status" value="1"/>
</dbReference>
<dbReference type="Pfam" id="PF00106">
    <property type="entry name" value="adh_short"/>
    <property type="match status" value="1"/>
</dbReference>
<dbReference type="PRINTS" id="PR00081">
    <property type="entry name" value="GDHRDH"/>
</dbReference>
<dbReference type="PRINTS" id="PR00080">
    <property type="entry name" value="SDRFAMILY"/>
</dbReference>
<dbReference type="SUPFAM" id="SSF51735">
    <property type="entry name" value="NAD(P)-binding Rossmann-fold domains"/>
    <property type="match status" value="1"/>
</dbReference>
<dbReference type="PROSITE" id="PS00061">
    <property type="entry name" value="ADH_SHORT"/>
    <property type="match status" value="1"/>
</dbReference>
<evidence type="ECO:0000250" key="1">
    <source>
        <dbReference type="UniProtKB" id="L0E2Z4"/>
    </source>
</evidence>
<evidence type="ECO:0000250" key="2">
    <source>
        <dbReference type="UniProtKB" id="O93868"/>
    </source>
</evidence>
<evidence type="ECO:0000255" key="3">
    <source>
        <dbReference type="PROSITE-ProRule" id="PRU10001"/>
    </source>
</evidence>
<evidence type="ECO:0000305" key="4"/>
<accession>Q07530</accession>
<accession>D6VRN6</accession>
<name>YD114_YEAST</name>
<organism>
    <name type="scientific">Saccharomyces cerevisiae (strain ATCC 204508 / S288c)</name>
    <name type="common">Baker's yeast</name>
    <dbReference type="NCBI Taxonomy" id="559292"/>
    <lineage>
        <taxon>Eukaryota</taxon>
        <taxon>Fungi</taxon>
        <taxon>Dikarya</taxon>
        <taxon>Ascomycota</taxon>
        <taxon>Saccharomycotina</taxon>
        <taxon>Saccharomycetes</taxon>
        <taxon>Saccharomycetales</taxon>
        <taxon>Saccharomycetaceae</taxon>
        <taxon>Saccharomyces</taxon>
    </lineage>
</organism>
<gene>
    <name type="ordered locus">YDL114W</name>
</gene>
<keyword id="KW-0521">NADP</keyword>
<keyword id="KW-0560">Oxidoreductase</keyword>
<keyword id="KW-1185">Reference proteome</keyword>
<comment type="similarity">
    <text evidence="4">Belongs to the short-chain dehydrogenases/reductases (SDR) family.</text>
</comment>
<proteinExistence type="inferred from homology"/>
<reference key="1">
    <citation type="journal article" date="1997" name="Nature">
        <title>The nucleotide sequence of Saccharomyces cerevisiae chromosome IV.</title>
        <authorList>
            <person name="Jacq C."/>
            <person name="Alt-Moerbe J."/>
            <person name="Andre B."/>
            <person name="Arnold W."/>
            <person name="Bahr A."/>
            <person name="Ballesta J.P.G."/>
            <person name="Bargues M."/>
            <person name="Baron L."/>
            <person name="Becker A."/>
            <person name="Biteau N."/>
            <person name="Bloecker H."/>
            <person name="Blugeon C."/>
            <person name="Boskovic J."/>
            <person name="Brandt P."/>
            <person name="Brueckner M."/>
            <person name="Buitrago M.J."/>
            <person name="Coster F."/>
            <person name="Delaveau T."/>
            <person name="del Rey F."/>
            <person name="Dujon B."/>
            <person name="Eide L.G."/>
            <person name="Garcia-Cantalejo J.M."/>
            <person name="Goffeau A."/>
            <person name="Gomez-Peris A."/>
            <person name="Granotier C."/>
            <person name="Hanemann V."/>
            <person name="Hankeln T."/>
            <person name="Hoheisel J.D."/>
            <person name="Jaeger W."/>
            <person name="Jimenez A."/>
            <person name="Jonniaux J.-L."/>
            <person name="Kraemer C."/>
            <person name="Kuester H."/>
            <person name="Laamanen P."/>
            <person name="Legros Y."/>
            <person name="Louis E.J."/>
            <person name="Moeller-Rieker S."/>
            <person name="Monnet A."/>
            <person name="Moro M."/>
            <person name="Mueller-Auer S."/>
            <person name="Nussbaumer B."/>
            <person name="Paricio N."/>
            <person name="Paulin L."/>
            <person name="Perea J."/>
            <person name="Perez-Alonso M."/>
            <person name="Perez-Ortin J.E."/>
            <person name="Pohl T.M."/>
            <person name="Prydz H."/>
            <person name="Purnelle B."/>
            <person name="Rasmussen S.W."/>
            <person name="Remacha M.A."/>
            <person name="Revuelta J.L."/>
            <person name="Rieger M."/>
            <person name="Salom D."/>
            <person name="Saluz H.P."/>
            <person name="Saiz J.E."/>
            <person name="Saren A.-M."/>
            <person name="Schaefer M."/>
            <person name="Scharfe M."/>
            <person name="Schmidt E.R."/>
            <person name="Schneider C."/>
            <person name="Scholler P."/>
            <person name="Schwarz S."/>
            <person name="Soler-Mira A."/>
            <person name="Urrestarazu L.A."/>
            <person name="Verhasselt P."/>
            <person name="Vissers S."/>
            <person name="Voet M."/>
            <person name="Volckaert G."/>
            <person name="Wagner G."/>
            <person name="Wambutt R."/>
            <person name="Wedler E."/>
            <person name="Wedler H."/>
            <person name="Woelfl S."/>
            <person name="Harris D.E."/>
            <person name="Bowman S."/>
            <person name="Brown D."/>
            <person name="Churcher C.M."/>
            <person name="Connor R."/>
            <person name="Dedman K."/>
            <person name="Gentles S."/>
            <person name="Hamlin N."/>
            <person name="Hunt S."/>
            <person name="Jones L."/>
            <person name="McDonald S."/>
            <person name="Murphy L.D."/>
            <person name="Niblett D."/>
            <person name="Odell C."/>
            <person name="Oliver K."/>
            <person name="Rajandream M.A."/>
            <person name="Richards C."/>
            <person name="Shore L."/>
            <person name="Walsh S.V."/>
            <person name="Barrell B.G."/>
            <person name="Dietrich F.S."/>
            <person name="Mulligan J.T."/>
            <person name="Allen E."/>
            <person name="Araujo R."/>
            <person name="Aviles E."/>
            <person name="Berno A."/>
            <person name="Carpenter J."/>
            <person name="Chen E."/>
            <person name="Cherry J.M."/>
            <person name="Chung E."/>
            <person name="Duncan M."/>
            <person name="Hunicke-Smith S."/>
            <person name="Hyman R.W."/>
            <person name="Komp C."/>
            <person name="Lashkari D."/>
            <person name="Lew H."/>
            <person name="Lin D."/>
            <person name="Mosedale D."/>
            <person name="Nakahara K."/>
            <person name="Namath A."/>
            <person name="Oefner P."/>
            <person name="Oh C."/>
            <person name="Petel F.X."/>
            <person name="Roberts D."/>
            <person name="Schramm S."/>
            <person name="Schroeder M."/>
            <person name="Shogren T."/>
            <person name="Shroff N."/>
            <person name="Winant A."/>
            <person name="Yelton M.A."/>
            <person name="Botstein D."/>
            <person name="Davis R.W."/>
            <person name="Johnston M."/>
            <person name="Andrews S."/>
            <person name="Brinkman R."/>
            <person name="Cooper J."/>
            <person name="Ding H."/>
            <person name="Du Z."/>
            <person name="Favello A."/>
            <person name="Fulton L."/>
            <person name="Gattung S."/>
            <person name="Greco T."/>
            <person name="Hallsworth K."/>
            <person name="Hawkins J."/>
            <person name="Hillier L.W."/>
            <person name="Jier M."/>
            <person name="Johnson D."/>
            <person name="Johnston L."/>
            <person name="Kirsten J."/>
            <person name="Kucaba T."/>
            <person name="Langston Y."/>
            <person name="Latreille P."/>
            <person name="Le T."/>
            <person name="Mardis E."/>
            <person name="Menezes S."/>
            <person name="Miller N."/>
            <person name="Nhan M."/>
            <person name="Pauley A."/>
            <person name="Peluso D."/>
            <person name="Rifkin L."/>
            <person name="Riles L."/>
            <person name="Taich A."/>
            <person name="Trevaskis E."/>
            <person name="Vignati D."/>
            <person name="Wilcox L."/>
            <person name="Wohldman P."/>
            <person name="Vaudin M."/>
            <person name="Wilson R."/>
            <person name="Waterston R."/>
            <person name="Albermann K."/>
            <person name="Hani J."/>
            <person name="Heumann K."/>
            <person name="Kleine K."/>
            <person name="Mewes H.-W."/>
            <person name="Zollner A."/>
            <person name="Zaccaria P."/>
        </authorList>
    </citation>
    <scope>NUCLEOTIDE SEQUENCE [LARGE SCALE GENOMIC DNA]</scope>
    <source>
        <strain>ATCC 204508 / S288c</strain>
    </source>
</reference>
<reference key="2">
    <citation type="journal article" date="2014" name="G3 (Bethesda)">
        <title>The reference genome sequence of Saccharomyces cerevisiae: Then and now.</title>
        <authorList>
            <person name="Engel S.R."/>
            <person name="Dietrich F.S."/>
            <person name="Fisk D.G."/>
            <person name="Binkley G."/>
            <person name="Balakrishnan R."/>
            <person name="Costanzo M.C."/>
            <person name="Dwight S.S."/>
            <person name="Hitz B.C."/>
            <person name="Karra K."/>
            <person name="Nash R.S."/>
            <person name="Weng S."/>
            <person name="Wong E.D."/>
            <person name="Lloyd P."/>
            <person name="Skrzypek M.S."/>
            <person name="Miyasato S.R."/>
            <person name="Simison M."/>
            <person name="Cherry J.M."/>
        </authorList>
    </citation>
    <scope>GENOME REANNOTATION</scope>
    <source>
        <strain>ATCC 204508 / S288c</strain>
    </source>
</reference>
<protein>
    <recommendedName>
        <fullName>Uncharacterized oxidoreductase YDL114W</fullName>
        <ecNumber>1.-.-.-</ecNumber>
    </recommendedName>
</protein>
<sequence>MVRKNKINRASGTTKHLKDFPSVILSLPSYNPSILSKNATALITGGSSGLGFELAKELSRRINKVIVADIQSFPTFAQVEYNNIFYYQCDITSLDEIKNLKKAIERDHGNINIIINNAGVAHIKKLEHMTNKEVEQLIDINLIGAYRIISTFAEDMIDNREGFIINIASVLGELTPARLTSYGASKGAMIGFHKCMSRHFRSLSTECNKTGIKTLLVCPGKIKTNMFIDVPTPSKLLAPDIIPSQLALAIISAMEHNHLQTLNAPYYVNLVPFFKTLSWPYRHLLKHFSGMDHVTSTSPRAINPKRSA</sequence>
<feature type="chain" id="PRO_0000240705" description="Uncharacterized oxidoreductase YDL114W">
    <location>
        <begin position="1"/>
        <end position="308"/>
    </location>
</feature>
<feature type="active site" description="Proton acceptor" evidence="3">
    <location>
        <position position="182"/>
    </location>
</feature>
<feature type="active site" description="Lowers pKa of active site Tyr" evidence="2">
    <location>
        <position position="186"/>
    </location>
</feature>
<feature type="binding site" evidence="1">
    <location>
        <position position="50"/>
    </location>
    <ligand>
        <name>NADP(+)</name>
        <dbReference type="ChEBI" id="CHEBI:58349"/>
    </ligand>
</feature>
<feature type="binding site" evidence="1">
    <location>
        <position position="90"/>
    </location>
    <ligand>
        <name>NADP(+)</name>
        <dbReference type="ChEBI" id="CHEBI:58349"/>
    </ligand>
</feature>
<feature type="binding site" evidence="2">
    <location>
        <position position="117"/>
    </location>
    <ligand>
        <name>NADP(+)</name>
        <dbReference type="ChEBI" id="CHEBI:58349"/>
    </ligand>
</feature>
<feature type="binding site" evidence="2">
    <location>
        <position position="182"/>
    </location>
    <ligand>
        <name>NADP(+)</name>
        <dbReference type="ChEBI" id="CHEBI:58349"/>
    </ligand>
</feature>
<feature type="binding site" evidence="2">
    <location>
        <position position="186"/>
    </location>
    <ligand>
        <name>NADP(+)</name>
        <dbReference type="ChEBI" id="CHEBI:58349"/>
    </ligand>
</feature>
<feature type="binding site" evidence="2">
    <location>
        <position position="222"/>
    </location>
    <ligand>
        <name>NADP(+)</name>
        <dbReference type="ChEBI" id="CHEBI:58349"/>
    </ligand>
</feature>
<feature type="binding site" evidence="1">
    <location>
        <position position="224"/>
    </location>
    <ligand>
        <name>NADP(+)</name>
        <dbReference type="ChEBI" id="CHEBI:58349"/>
    </ligand>
</feature>